<dbReference type="EMBL" id="AE000657">
    <property type="protein sequence ID" value="AAC07367.1"/>
    <property type="molecule type" value="Genomic_DNA"/>
</dbReference>
<dbReference type="EMBL" id="AE000657">
    <property type="protein sequence ID" value="AAC07540.1"/>
    <property type="molecule type" value="Genomic_DNA"/>
</dbReference>
<dbReference type="EMBL" id="AE000667">
    <property type="protein sequence ID" value="AAC07980.1"/>
    <property type="molecule type" value="Genomic_DNA"/>
</dbReference>
<dbReference type="PIR" id="B70421">
    <property type="entry name" value="B70421"/>
</dbReference>
<dbReference type="RefSeq" id="NP_046428.1">
    <property type="nucleotide sequence ID" value="NC_001880.1"/>
</dbReference>
<dbReference type="RefSeq" id="NP_213961.1">
    <property type="nucleotide sequence ID" value="NC_000918.1"/>
</dbReference>
<dbReference type="RefSeq" id="NP_214124.1">
    <property type="nucleotide sequence ID" value="NC_000918.1"/>
</dbReference>
<dbReference type="RefSeq" id="WP_010880899.1">
    <property type="nucleotide sequence ID" value="NC_000918.1"/>
</dbReference>
<dbReference type="EnsemblBacteria" id="AAC07367">
    <property type="protein sequence ID" value="AAC07367"/>
    <property type="gene ID" value="aq_1391"/>
</dbReference>
<dbReference type="EnsemblBacteria" id="AAC07540">
    <property type="protein sequence ID" value="AAC07540"/>
    <property type="gene ID" value="aq_1640"/>
</dbReference>
<dbReference type="EnsemblBacteria" id="AAC07980">
    <property type="protein sequence ID" value="AAC07980"/>
    <property type="gene ID" value="aq_aa40"/>
</dbReference>
<dbReference type="KEGG" id="aae:aq_1391"/>
<dbReference type="KEGG" id="aae:aq_1640"/>
<dbReference type="KEGG" id="aae:aq_aa40"/>
<dbReference type="eggNOG" id="COG3039">
    <property type="taxonomic scope" value="Bacteria"/>
</dbReference>
<dbReference type="HOGENOM" id="CLU_962191_0_0_0"/>
<dbReference type="InParanoid" id="O70075"/>
<dbReference type="OrthoDB" id="256194at2"/>
<dbReference type="Proteomes" id="UP000000798">
    <property type="component" value="Chromosome"/>
</dbReference>
<dbReference type="Proteomes" id="UP000000798">
    <property type="component" value="Plasmid ece1"/>
</dbReference>
<dbReference type="GO" id="GO:0003677">
    <property type="term" value="F:DNA binding"/>
    <property type="evidence" value="ECO:0007669"/>
    <property type="project" value="InterPro"/>
</dbReference>
<dbReference type="GO" id="GO:0004803">
    <property type="term" value="F:transposase activity"/>
    <property type="evidence" value="ECO:0007669"/>
    <property type="project" value="InterPro"/>
</dbReference>
<dbReference type="GO" id="GO:0006313">
    <property type="term" value="P:DNA transposition"/>
    <property type="evidence" value="ECO:0007669"/>
    <property type="project" value="InterPro"/>
</dbReference>
<dbReference type="InterPro" id="IPR002559">
    <property type="entry name" value="Transposase_11"/>
</dbReference>
<dbReference type="Pfam" id="PF01609">
    <property type="entry name" value="DDE_Tnp_1"/>
    <property type="match status" value="1"/>
</dbReference>
<organism>
    <name type="scientific">Aquifex aeolicus (strain VF5)</name>
    <dbReference type="NCBI Taxonomy" id="224324"/>
    <lineage>
        <taxon>Bacteria</taxon>
        <taxon>Pseudomonadati</taxon>
        <taxon>Aquificota</taxon>
        <taxon>Aquificia</taxon>
        <taxon>Aquificales</taxon>
        <taxon>Aquificaceae</taxon>
        <taxon>Aquifex</taxon>
    </lineage>
</organism>
<name>Y1391_AQUAE</name>
<keyword id="KW-0614">Plasmid</keyword>
<keyword id="KW-1185">Reference proteome</keyword>
<accession>O70075</accession>
<proteinExistence type="predicted"/>
<sequence>MTQWKRRSRRKGMRTRNNKQLIKLILTKSREICNTIRPSQYNKRGRPRVYEDHLIVAALLIKILENLSLRDLEERLKDLFPKVPDFTTLHYRFRKLNRGYLKELIHRTAKEIMEKLQAKEFYCLIADGTGFGYAQAYELKWKKGKELRNVKSHVKTEVLVGVVRNKAIVVDINTGKSYADENMLLRSMLKELGFRARYFLGDAYYGKSAGVLEEIKKLRMESIVPVRDTAHTRVRNMYRLWAKRNYEIRRKVYRKNRYRVEQVIGIVKNRFGDRDNVYDFEIASLYVLGRFVLYNLILLLKLLLLCLNLLRITWASSRFIL</sequence>
<protein>
    <recommendedName>
        <fullName>Uncharacterized protein aq_1391/aq_1640/aq_aa40</fullName>
    </recommendedName>
</protein>
<gene>
    <name type="ordered locus">aq_1391</name>
</gene>
<gene>
    <name type="ordered locus">aq_1640</name>
</gene>
<gene>
    <name type="ordered locus">aq_aa40</name>
</gene>
<reference key="1">
    <citation type="journal article" date="1998" name="Nature">
        <title>The complete genome of the hyperthermophilic bacterium Aquifex aeolicus.</title>
        <authorList>
            <person name="Deckert G."/>
            <person name="Warren P.V."/>
            <person name="Gaasterland T."/>
            <person name="Young W.G."/>
            <person name="Lenox A.L."/>
            <person name="Graham D.E."/>
            <person name="Overbeek R."/>
            <person name="Snead M.A."/>
            <person name="Keller M."/>
            <person name="Aujay M."/>
            <person name="Huber R."/>
            <person name="Feldman R.A."/>
            <person name="Short J.M."/>
            <person name="Olsen G.J."/>
            <person name="Swanson R.V."/>
        </authorList>
    </citation>
    <scope>NUCLEOTIDE SEQUENCE [LARGE SCALE GENOMIC DNA]</scope>
    <source>
        <strain>VF5</strain>
    </source>
</reference>
<feature type="chain" id="PRO_0000187006" description="Uncharacterized protein aq_1391/aq_1640/aq_aa40">
    <location>
        <begin position="1"/>
        <end position="321"/>
    </location>
</feature>
<geneLocation type="plasmid">
    <name>ece1</name>
</geneLocation>